<protein>
    <recommendedName>
        <fullName>Thyroid hormone-induced protein B</fullName>
    </recommendedName>
</protein>
<keyword id="KW-0217">Developmental protein</keyword>
<keyword id="KW-0325">Glycoprotein</keyword>
<keyword id="KW-0472">Membrane</keyword>
<keyword id="KW-1185">Reference proteome</keyword>
<keyword id="KW-0677">Repeat</keyword>
<keyword id="KW-0964">Secreted</keyword>
<keyword id="KW-0732">Signal</keyword>
<accession>Q91641</accession>
<organism>
    <name type="scientific">Xenopus laevis</name>
    <name type="common">African clawed frog</name>
    <dbReference type="NCBI Taxonomy" id="8355"/>
    <lineage>
        <taxon>Eukaryota</taxon>
        <taxon>Metazoa</taxon>
        <taxon>Chordata</taxon>
        <taxon>Craniata</taxon>
        <taxon>Vertebrata</taxon>
        <taxon>Euteleostomi</taxon>
        <taxon>Amphibia</taxon>
        <taxon>Batrachia</taxon>
        <taxon>Anura</taxon>
        <taxon>Pipoidea</taxon>
        <taxon>Pipidae</taxon>
        <taxon>Xenopodinae</taxon>
        <taxon>Xenopus</taxon>
        <taxon>Xenopus</taxon>
    </lineage>
</organism>
<sequence length="688" mass="77658">MMLSHWVLLLSLGAVWLAEGGEISPGSCTFENSTCAYTSAFPFLQWTVNIEGHYVSVDSSNGLRGQKAVLISPDLHLAEWSCLRLVYQIAGSESSPSPSSLNVFVRPEGESFDYLLWSAEEHSDSWLISSIDLKNTTKRFKIILEGVLGENTMSSIAIFEVKMTTGYCIECDFEENHLCGYMNSWNPNVNWFVGGGNVKNSHSILPRDHTLNNELGHYMYVDSVYVKHFQEVAQLVSPLIITPISGCLSFYYQLQRETSNIFLVHTRDLHGSYDEIWKMGAVRQGEWNLAEVDLNAHVPLEVIFEVAFNGIQAGYVALDDILFSPVSCSGQEGMFFDAREAGCDFEEGMCQFHQDDNNGSGWSRVKVKPNAYQMGDHTTGLGYFMIANTRFTGQPAYFGRLYGPSLPGNIQYCIRFFYSLYGFYKTIDSLAVYIFEENHVVQEKIWSAHETPKGVWLQAEISIHKPMPFKVVFVSWCKSLWDCGIAALDDISVSIGSCKISDRIPPLPGKCTFEKNDCGFEQEWQRRGIWHRIQGRTPTFYTGPNGDHTSGVGYYMYIEATNMVFGQKAKLISRPLRAVAGKQCLTFYYHMYGAGTGLLNVYLTKEGDINKDTLLWTRKGEQSITWLKAQMEYESEQQHKIVFEAVRGISIRSDIAIDDILFQNGPCNDSSDPLQSSGYSDNFNNIEF</sequence>
<reference key="1">
    <citation type="journal article" date="1996" name="Proc. Natl. Acad. Sci. U.S.A.">
        <title>The thyroid hormone-induced tail resorption program during Xenopus laevis metamorphosis.</title>
        <authorList>
            <person name="Brown D.D."/>
            <person name="Wang Z."/>
            <person name="Furlow J.D."/>
            <person name="Kanamori A."/>
            <person name="Schwartzman R.A."/>
            <person name="Remo B.F."/>
            <person name="Pinder A."/>
        </authorList>
    </citation>
    <scope>NUCLEOTIDE SEQUENCE [MRNA]</scope>
</reference>
<proteinExistence type="evidence at transcript level"/>
<evidence type="ECO:0000255" key="1"/>
<evidence type="ECO:0000255" key="2">
    <source>
        <dbReference type="PROSITE-ProRule" id="PRU00128"/>
    </source>
</evidence>
<evidence type="ECO:0000305" key="3"/>
<name>THIB_XENLA</name>
<dbReference type="EMBL" id="U37376">
    <property type="protein sequence ID" value="AAC59868.1"/>
    <property type="status" value="ALT_FRAME"/>
    <property type="molecule type" value="mRNA"/>
</dbReference>
<dbReference type="RefSeq" id="NP_001079067.1">
    <property type="nucleotide sequence ID" value="NM_001085598.1"/>
</dbReference>
<dbReference type="SMR" id="Q91641"/>
<dbReference type="GeneID" id="373599"/>
<dbReference type="KEGG" id="xla:373599"/>
<dbReference type="AGR" id="Xenbase:XB-GENE-864900"/>
<dbReference type="CTD" id="373599"/>
<dbReference type="Xenbase" id="XB-GENE-864900">
    <property type="gene designation" value="mamdc2.L"/>
</dbReference>
<dbReference type="OrthoDB" id="10020495at2759"/>
<dbReference type="Proteomes" id="UP000186698">
    <property type="component" value="Chromosome 1L"/>
</dbReference>
<dbReference type="Bgee" id="373599">
    <property type="expression patterns" value="Expressed in stomach and 11 other cell types or tissues"/>
</dbReference>
<dbReference type="GO" id="GO:0005576">
    <property type="term" value="C:extracellular region"/>
    <property type="evidence" value="ECO:0007669"/>
    <property type="project" value="UniProtKB-SubCell"/>
</dbReference>
<dbReference type="GO" id="GO:0016020">
    <property type="term" value="C:membrane"/>
    <property type="evidence" value="ECO:0007669"/>
    <property type="project" value="UniProtKB-SubCell"/>
</dbReference>
<dbReference type="CDD" id="cd06263">
    <property type="entry name" value="MAM"/>
    <property type="match status" value="4"/>
</dbReference>
<dbReference type="FunFam" id="2.60.120.200:FF:000128">
    <property type="entry name" value="enteropeptidase isoform X2"/>
    <property type="match status" value="1"/>
</dbReference>
<dbReference type="Gene3D" id="2.60.120.200">
    <property type="match status" value="4"/>
</dbReference>
<dbReference type="InterPro" id="IPR013320">
    <property type="entry name" value="ConA-like_dom_sf"/>
</dbReference>
<dbReference type="InterPro" id="IPR000998">
    <property type="entry name" value="MAM_dom"/>
</dbReference>
<dbReference type="InterPro" id="IPR051560">
    <property type="entry name" value="MAM_domain-containing"/>
</dbReference>
<dbReference type="PANTHER" id="PTHR23282">
    <property type="entry name" value="APICAL ENDOSOMAL GLYCOPROTEIN PRECURSOR"/>
    <property type="match status" value="1"/>
</dbReference>
<dbReference type="PANTHER" id="PTHR23282:SF116">
    <property type="entry name" value="MAM DOMAIN-CONTAINING PROTEIN 2"/>
    <property type="match status" value="1"/>
</dbReference>
<dbReference type="Pfam" id="PF00629">
    <property type="entry name" value="MAM"/>
    <property type="match status" value="4"/>
</dbReference>
<dbReference type="SMART" id="SM00137">
    <property type="entry name" value="MAM"/>
    <property type="match status" value="4"/>
</dbReference>
<dbReference type="SUPFAM" id="SSF49899">
    <property type="entry name" value="Concanavalin A-like lectins/glucanases"/>
    <property type="match status" value="4"/>
</dbReference>
<dbReference type="PROSITE" id="PS00740">
    <property type="entry name" value="MAM_1"/>
    <property type="match status" value="2"/>
</dbReference>
<dbReference type="PROSITE" id="PS50060">
    <property type="entry name" value="MAM_2"/>
    <property type="match status" value="4"/>
</dbReference>
<comment type="subcellular location">
    <subcellularLocation>
        <location>Membrane</location>
        <topology>Peripheral membrane protein</topology>
    </subcellularLocation>
    <subcellularLocation>
        <location>Secreted</location>
        <location>Extracellular space</location>
    </subcellularLocation>
</comment>
<comment type="developmental stage">
    <text>Metamorphosis; thyroid hormone-induced tail resorption.</text>
</comment>
<comment type="induction">
    <text>By thyroid hormone.</text>
</comment>
<comment type="sequence caution" evidence="3">
    <conflict type="frameshift">
        <sequence resource="EMBL-CDS" id="AAC59868"/>
    </conflict>
</comment>
<feature type="signal peptide" evidence="1">
    <location>
        <begin position="1"/>
        <end position="20"/>
    </location>
</feature>
<feature type="chain" id="PRO_0000022490" description="Thyroid hormone-induced protein B">
    <location>
        <begin position="21"/>
        <end position="688"/>
    </location>
</feature>
<feature type="domain" description="MAM 1" evidence="2">
    <location>
        <begin position="26"/>
        <end position="169"/>
    </location>
</feature>
<feature type="domain" description="MAM 2" evidence="2">
    <location>
        <begin position="170"/>
        <end position="330"/>
    </location>
</feature>
<feature type="domain" description="MAM 3" evidence="2">
    <location>
        <begin position="341"/>
        <end position="500"/>
    </location>
</feature>
<feature type="domain" description="MAM 4" evidence="2">
    <location>
        <begin position="509"/>
        <end position="669"/>
    </location>
</feature>
<feature type="glycosylation site" description="N-linked (GlcNAc...) asparagine" evidence="1">
    <location>
        <position position="32"/>
    </location>
</feature>
<feature type="glycosylation site" description="N-linked (GlcNAc...) asparagine" evidence="1">
    <location>
        <position position="135"/>
    </location>
</feature>
<feature type="glycosylation site" description="N-linked (GlcNAc...) asparagine" evidence="1">
    <location>
        <position position="358"/>
    </location>
</feature>
<feature type="glycosylation site" description="N-linked (GlcNAc...) asparagine" evidence="1">
    <location>
        <position position="668"/>
    </location>
</feature>